<name>BOREA_RAT</name>
<accession>Q6AXW0</accession>
<protein>
    <recommendedName>
        <fullName>Borealin</fullName>
    </recommendedName>
    <alternativeName>
        <fullName>Cell division cycle-associated protein 8</fullName>
    </alternativeName>
</protein>
<proteinExistence type="evidence at protein level"/>
<gene>
    <name type="primary">Cdca8</name>
</gene>
<comment type="function">
    <text evidence="2">Component of the chromosomal passenger complex (CPC), a complex that acts as a key regulator of mitosis. The CPC complex has essential functions at the centromere in ensuring correct chromosome alignment and segregation and is required for chromatin-induced microtubule stabilization and spindle assembly. In the complex, it may be required to direct the CPC to centromeric DNA (By similarity).</text>
</comment>
<comment type="subunit">
    <text evidence="2">May form homooligomers and homodimers. Component of the chromosomal passenger complex (CPC) composed of at least BIRC5/survivin, CDCA8/borealin, INCENP, AURKB or AURKC; in the complex forms a triple-helix bundle-based subcomplex with INCENP and BIRC5. Interacts with SENP3, UBE2I and RANBP2. Interacts (phosphorylated) with SGO1 and SGO2; the association is dependent on CDK1 (By similarity).</text>
</comment>
<comment type="subcellular location">
    <subcellularLocation>
        <location evidence="2">Nucleus</location>
        <location evidence="2">Nucleolus</location>
    </subcellularLocation>
    <subcellularLocation>
        <location evidence="2">Cytoplasm</location>
    </subcellularLocation>
    <subcellularLocation>
        <location evidence="2">Chromosome</location>
        <location evidence="2">Centromere</location>
    </subcellularLocation>
    <subcellularLocation>
        <location evidence="2">Cytoplasm</location>
        <location evidence="2">Cytoskeleton</location>
        <location evidence="2">Spindle</location>
    </subcellularLocation>
    <text evidence="2">Localizes on chromosome arms and inner centromeres from prophase through metaphase and then transferring to the spindle midzone and midbody from anaphase through cytokinesis.</text>
</comment>
<comment type="domain">
    <text evidence="1">The C-terminal region (aa 215-288) represents the dimerization motif.</text>
</comment>
<comment type="PTM">
    <text evidence="2">Phosphorylated by TTK, essentially at Thr-88 and Thr-94. Phosphorylation (probably by CDK1) promotes targeting of the CPC to centromeric DNA.</text>
</comment>
<comment type="PTM">
    <text evidence="2">Sumoylated by UBE2I and RANBP2. Desumoylated by SENP3 through the removal of SUMO2 and SUMO3 (By similarity).</text>
</comment>
<comment type="PTM">
    <text evidence="3">Citrullinated by PADI4.</text>
</comment>
<comment type="similarity">
    <text evidence="5">Belongs to the borealin family.</text>
</comment>
<dbReference type="EMBL" id="BC079293">
    <property type="protein sequence ID" value="AAH79293.1"/>
    <property type="molecule type" value="mRNA"/>
</dbReference>
<dbReference type="EMBL" id="BC079274">
    <property type="protein sequence ID" value="AAH79274.1"/>
    <property type="molecule type" value="mRNA"/>
</dbReference>
<dbReference type="RefSeq" id="NP_001020221.1">
    <property type="nucleotide sequence ID" value="NM_001025050.1"/>
</dbReference>
<dbReference type="RefSeq" id="XP_008762286.1">
    <property type="nucleotide sequence ID" value="XM_008764064.3"/>
</dbReference>
<dbReference type="SMR" id="Q6AXW0"/>
<dbReference type="FunCoup" id="Q6AXW0">
    <property type="interactions" value="1659"/>
</dbReference>
<dbReference type="STRING" id="10116.ENSRNOP00000043633"/>
<dbReference type="GlyGen" id="Q6AXW0">
    <property type="glycosylation" value="1 site"/>
</dbReference>
<dbReference type="iPTMnet" id="Q6AXW0"/>
<dbReference type="PhosphoSitePlus" id="Q6AXW0"/>
<dbReference type="jPOST" id="Q6AXW0"/>
<dbReference type="PaxDb" id="10116-ENSRNOP00000043633"/>
<dbReference type="Ensembl" id="ENSRNOT00000048293.5">
    <property type="protein sequence ID" value="ENSRNOP00000043633.4"/>
    <property type="gene ID" value="ENSRNOG00000031431.6"/>
</dbReference>
<dbReference type="GeneID" id="500545"/>
<dbReference type="KEGG" id="rno:500545"/>
<dbReference type="UCSC" id="RGD:1566306">
    <property type="organism name" value="rat"/>
</dbReference>
<dbReference type="AGR" id="RGD:1566306"/>
<dbReference type="CTD" id="55143"/>
<dbReference type="RGD" id="1566306">
    <property type="gene designation" value="Cdca8"/>
</dbReference>
<dbReference type="eggNOG" id="ENOG502QS4S">
    <property type="taxonomic scope" value="Eukaryota"/>
</dbReference>
<dbReference type="GeneTree" id="ENSGT00390000011115"/>
<dbReference type="HOGENOM" id="CLU_074128_0_0_1"/>
<dbReference type="InParanoid" id="Q6AXW0"/>
<dbReference type="OMA" id="DMNWLEY"/>
<dbReference type="OrthoDB" id="6360905at2759"/>
<dbReference type="PhylomeDB" id="Q6AXW0"/>
<dbReference type="Reactome" id="R-RNO-141444">
    <property type="pathway name" value="Amplification of signal from unattached kinetochores via a MAD2 inhibitory signal"/>
</dbReference>
<dbReference type="Reactome" id="R-RNO-2467813">
    <property type="pathway name" value="Separation of Sister Chromatids"/>
</dbReference>
<dbReference type="Reactome" id="R-RNO-2500257">
    <property type="pathway name" value="Resolution of Sister Chromatid Cohesion"/>
</dbReference>
<dbReference type="Reactome" id="R-RNO-4615885">
    <property type="pathway name" value="SUMOylation of DNA replication proteins"/>
</dbReference>
<dbReference type="Reactome" id="R-RNO-5663220">
    <property type="pathway name" value="RHO GTPases Activate Formins"/>
</dbReference>
<dbReference type="Reactome" id="R-RNO-68877">
    <property type="pathway name" value="Mitotic Prometaphase"/>
</dbReference>
<dbReference type="Reactome" id="R-RNO-9648025">
    <property type="pathway name" value="EML4 and NUDC in mitotic spindle formation"/>
</dbReference>
<dbReference type="PRO" id="PR:Q6AXW0"/>
<dbReference type="Proteomes" id="UP000002494">
    <property type="component" value="Chromosome 5"/>
</dbReference>
<dbReference type="Bgee" id="ENSRNOG00000031431">
    <property type="expression patterns" value="Expressed in testis and 18 other cell types or tissues"/>
</dbReference>
<dbReference type="GO" id="GO:0010369">
    <property type="term" value="C:chromocenter"/>
    <property type="evidence" value="ECO:0000266"/>
    <property type="project" value="RGD"/>
</dbReference>
<dbReference type="GO" id="GO:0032133">
    <property type="term" value="C:chromosome passenger complex"/>
    <property type="evidence" value="ECO:0000250"/>
    <property type="project" value="UniProtKB"/>
</dbReference>
<dbReference type="GO" id="GO:0000775">
    <property type="term" value="C:chromosome, centromeric region"/>
    <property type="evidence" value="ECO:0000266"/>
    <property type="project" value="RGD"/>
</dbReference>
<dbReference type="GO" id="GO:0005737">
    <property type="term" value="C:cytoplasm"/>
    <property type="evidence" value="ECO:0007669"/>
    <property type="project" value="UniProtKB-SubCell"/>
</dbReference>
<dbReference type="GO" id="GO:0045171">
    <property type="term" value="C:intercellular bridge"/>
    <property type="evidence" value="ECO:0007669"/>
    <property type="project" value="Ensembl"/>
</dbReference>
<dbReference type="GO" id="GO:0015630">
    <property type="term" value="C:microtubule cytoskeleton"/>
    <property type="evidence" value="ECO:0000266"/>
    <property type="project" value="RGD"/>
</dbReference>
<dbReference type="GO" id="GO:0030496">
    <property type="term" value="C:midbody"/>
    <property type="evidence" value="ECO:0000266"/>
    <property type="project" value="RGD"/>
</dbReference>
<dbReference type="GO" id="GO:0005730">
    <property type="term" value="C:nucleolus"/>
    <property type="evidence" value="ECO:0007669"/>
    <property type="project" value="UniProtKB-SubCell"/>
</dbReference>
<dbReference type="GO" id="GO:0005654">
    <property type="term" value="C:nucleoplasm"/>
    <property type="evidence" value="ECO:0007669"/>
    <property type="project" value="Ensembl"/>
</dbReference>
<dbReference type="GO" id="GO:0032991">
    <property type="term" value="C:protein-containing complex"/>
    <property type="evidence" value="ECO:0000250"/>
    <property type="project" value="UniProtKB"/>
</dbReference>
<dbReference type="GO" id="GO:0051233">
    <property type="term" value="C:spindle midzone"/>
    <property type="evidence" value="ECO:0000318"/>
    <property type="project" value="GO_Central"/>
</dbReference>
<dbReference type="GO" id="GO:0051301">
    <property type="term" value="P:cell division"/>
    <property type="evidence" value="ECO:0007669"/>
    <property type="project" value="UniProtKB-KW"/>
</dbReference>
<dbReference type="GO" id="GO:0051276">
    <property type="term" value="P:chromosome organization"/>
    <property type="evidence" value="ECO:0000266"/>
    <property type="project" value="RGD"/>
</dbReference>
<dbReference type="GO" id="GO:0007080">
    <property type="term" value="P:mitotic metaphase chromosome alignment"/>
    <property type="evidence" value="ECO:0000266"/>
    <property type="project" value="RGD"/>
</dbReference>
<dbReference type="GO" id="GO:0000070">
    <property type="term" value="P:mitotic sister chromatid segregation"/>
    <property type="evidence" value="ECO:0000318"/>
    <property type="project" value="GO_Central"/>
</dbReference>
<dbReference type="Gene3D" id="6.10.140.560">
    <property type="match status" value="1"/>
</dbReference>
<dbReference type="Gene3D" id="6.10.250.1900">
    <property type="match status" value="1"/>
</dbReference>
<dbReference type="InterPro" id="IPR046466">
    <property type="entry name" value="Borealin_C"/>
</dbReference>
<dbReference type="InterPro" id="IPR018851">
    <property type="entry name" value="Borealin_N"/>
</dbReference>
<dbReference type="InterPro" id="IPR018867">
    <property type="entry name" value="Cell_div_borealin"/>
</dbReference>
<dbReference type="PANTHER" id="PTHR16040">
    <property type="entry name" value="AUSTRALIN, ISOFORM A-RELATED"/>
    <property type="match status" value="1"/>
</dbReference>
<dbReference type="PANTHER" id="PTHR16040:SF6">
    <property type="entry name" value="BOREALIN"/>
    <property type="match status" value="1"/>
</dbReference>
<dbReference type="Pfam" id="PF10512">
    <property type="entry name" value="Borealin"/>
    <property type="match status" value="1"/>
</dbReference>
<dbReference type="Pfam" id="PF10444">
    <property type="entry name" value="Nbl1_Borealin_N"/>
    <property type="match status" value="1"/>
</dbReference>
<sequence>MAPKKRSSRGTRTNTLRSRKLASFLKDFDREVQVRTKQIESDRQTLLKEVENLYNIEVLRLPKALQVMKWLDYFALGGNRQALEEAATADRDITEINNLTAEAIQTPLKSVKKRKVIEVDEAIKEEEEDEEEEGGGGGGRKSHKNLRSARVKRCPPSKKRTQSIQGRSRSKRLSHDFVTPAMSRLEPSLVKPTPGMTPRFDSRVFKTPGLRTPAAKEQVYNISINGSPLADSKEISLSVPIGGGASLRLLASDLQRVDIAQLNPEALGNIKKLSSRLAQICSSIRTGR</sequence>
<evidence type="ECO:0000250" key="1"/>
<evidence type="ECO:0000250" key="2">
    <source>
        <dbReference type="UniProtKB" id="Q53HL2"/>
    </source>
</evidence>
<evidence type="ECO:0000250" key="3">
    <source>
        <dbReference type="UniProtKB" id="Q8BHX3"/>
    </source>
</evidence>
<evidence type="ECO:0000256" key="4">
    <source>
        <dbReference type="SAM" id="MobiDB-lite"/>
    </source>
</evidence>
<evidence type="ECO:0000305" key="5"/>
<evidence type="ECO:0007744" key="6">
    <source>
    </source>
</evidence>
<keyword id="KW-0131">Cell cycle</keyword>
<keyword id="KW-0132">Cell division</keyword>
<keyword id="KW-0137">Centromere</keyword>
<keyword id="KW-0158">Chromosome</keyword>
<keyword id="KW-0164">Citrullination</keyword>
<keyword id="KW-0963">Cytoplasm</keyword>
<keyword id="KW-0206">Cytoskeleton</keyword>
<keyword id="KW-1017">Isopeptide bond</keyword>
<keyword id="KW-0498">Mitosis</keyword>
<keyword id="KW-0539">Nucleus</keyword>
<keyword id="KW-0597">Phosphoprotein</keyword>
<keyword id="KW-1185">Reference proteome</keyword>
<keyword id="KW-0832">Ubl conjugation</keyword>
<feature type="chain" id="PRO_0000247078" description="Borealin">
    <location>
        <begin position="1"/>
        <end position="288"/>
    </location>
</feature>
<feature type="region of interest" description="Required for interaction with SENP3" evidence="1">
    <location>
        <begin position="1"/>
        <end position="149"/>
    </location>
</feature>
<feature type="region of interest" description="Required for centromere localization" evidence="1">
    <location>
        <begin position="1"/>
        <end position="88"/>
    </location>
</feature>
<feature type="region of interest" description="Required for interaction with INCENP" evidence="1">
    <location>
        <begin position="1"/>
        <end position="58"/>
    </location>
</feature>
<feature type="region of interest" description="Required to form a minimal CPC core complex that localizes to the central spindle and midbody and properly executes the role of the CPC during cytokinesis" evidence="1">
    <location>
        <begin position="10"/>
        <end position="109"/>
    </location>
</feature>
<feature type="region of interest" description="Required for interaction with INCENP and BIRC5" evidence="1">
    <location>
        <begin position="20"/>
        <end position="78"/>
    </location>
</feature>
<feature type="region of interest" description="Disordered" evidence="4">
    <location>
        <begin position="124"/>
        <end position="173"/>
    </location>
</feature>
<feature type="compositionally biased region" description="Acidic residues" evidence="4">
    <location>
        <begin position="124"/>
        <end position="134"/>
    </location>
</feature>
<feature type="compositionally biased region" description="Basic residues" evidence="4">
    <location>
        <begin position="140"/>
        <end position="161"/>
    </location>
</feature>
<feature type="modified residue" description="Phosphothreonine; by TTK" evidence="2">
    <location>
        <position position="88"/>
    </location>
</feature>
<feature type="modified residue" description="Citrulline" evidence="1">
    <location>
        <position position="91"/>
    </location>
</feature>
<feature type="modified residue" description="Phosphothreonine; by TTK" evidence="2">
    <location>
        <position position="94"/>
    </location>
</feature>
<feature type="modified residue" description="Phosphothreonine" evidence="2">
    <location>
        <position position="106"/>
    </location>
</feature>
<feature type="modified residue" description="Phosphoserine" evidence="2">
    <location>
        <position position="110"/>
    </location>
</feature>
<feature type="modified residue" description="Phosphoserine; by AURKB" evidence="2">
    <location>
        <position position="174"/>
    </location>
</feature>
<feature type="modified residue" description="Phosphothreonine" evidence="2">
    <location>
        <position position="197"/>
    </location>
</feature>
<feature type="modified residue" description="Phosphothreonine" evidence="2">
    <location>
        <position position="212"/>
    </location>
</feature>
<feature type="modified residue" description="Phosphoserine" evidence="6">
    <location>
        <position position="227"/>
    </location>
</feature>
<feature type="modified residue" description="Phosphoserine" evidence="2">
    <location>
        <position position="232"/>
    </location>
</feature>
<feature type="modified residue" description="Phosphoserine" evidence="2">
    <location>
        <position position="246"/>
    </location>
</feature>
<feature type="modified residue" description="Phosphoserine" evidence="2">
    <location>
        <position position="252"/>
    </location>
</feature>
<feature type="cross-link" description="Glycyl lysine isopeptide (Lys-Gly) (interchain with G-Cter in SUMO2)" evidence="2">
    <location>
        <position position="144"/>
    </location>
</feature>
<organism>
    <name type="scientific">Rattus norvegicus</name>
    <name type="common">Rat</name>
    <dbReference type="NCBI Taxonomy" id="10116"/>
    <lineage>
        <taxon>Eukaryota</taxon>
        <taxon>Metazoa</taxon>
        <taxon>Chordata</taxon>
        <taxon>Craniata</taxon>
        <taxon>Vertebrata</taxon>
        <taxon>Euteleostomi</taxon>
        <taxon>Mammalia</taxon>
        <taxon>Eutheria</taxon>
        <taxon>Euarchontoglires</taxon>
        <taxon>Glires</taxon>
        <taxon>Rodentia</taxon>
        <taxon>Myomorpha</taxon>
        <taxon>Muroidea</taxon>
        <taxon>Muridae</taxon>
        <taxon>Murinae</taxon>
        <taxon>Rattus</taxon>
    </lineage>
</organism>
<reference key="1">
    <citation type="journal article" date="2004" name="Genome Res.">
        <title>The status, quality, and expansion of the NIH full-length cDNA project: the Mammalian Gene Collection (MGC).</title>
        <authorList>
            <consortium name="The MGC Project Team"/>
        </authorList>
    </citation>
    <scope>NUCLEOTIDE SEQUENCE [LARGE SCALE MRNA]</scope>
    <source>
        <tissue>Testis</tissue>
    </source>
</reference>
<reference key="2">
    <citation type="journal article" date="2012" name="Nat. Commun.">
        <title>Quantitative maps of protein phosphorylation sites across 14 different rat organs and tissues.</title>
        <authorList>
            <person name="Lundby A."/>
            <person name="Secher A."/>
            <person name="Lage K."/>
            <person name="Nordsborg N.B."/>
            <person name="Dmytriyev A."/>
            <person name="Lundby C."/>
            <person name="Olsen J.V."/>
        </authorList>
    </citation>
    <scope>PHOSPHORYLATION [LARGE SCALE ANALYSIS] AT SER-227</scope>
    <scope>IDENTIFICATION BY MASS SPECTROMETRY [LARGE SCALE ANALYSIS]</scope>
</reference>